<evidence type="ECO:0000255" key="1">
    <source>
        <dbReference type="HAMAP-Rule" id="MF_01149"/>
    </source>
</evidence>
<proteinExistence type="inferred from homology"/>
<feature type="chain" id="PRO_1000137495" description="Uncharacterized MFS-type transporter YcaD">
    <location>
        <begin position="1"/>
        <end position="382"/>
    </location>
</feature>
<feature type="transmembrane region" description="Helical" evidence="1">
    <location>
        <begin position="8"/>
        <end position="28"/>
    </location>
</feature>
<feature type="transmembrane region" description="Helical" evidence="1">
    <location>
        <begin position="45"/>
        <end position="65"/>
    </location>
</feature>
<feature type="transmembrane region" description="Helical" evidence="1">
    <location>
        <begin position="75"/>
        <end position="95"/>
    </location>
</feature>
<feature type="transmembrane region" description="Helical" evidence="1">
    <location>
        <begin position="102"/>
        <end position="122"/>
    </location>
</feature>
<feature type="transmembrane region" description="Helical" evidence="1">
    <location>
        <begin position="131"/>
        <end position="151"/>
    </location>
</feature>
<feature type="transmembrane region" description="Helical" evidence="1">
    <location>
        <begin position="157"/>
        <end position="177"/>
    </location>
</feature>
<feature type="transmembrane region" description="Helical" evidence="1">
    <location>
        <begin position="204"/>
        <end position="224"/>
    </location>
</feature>
<feature type="transmembrane region" description="Helical" evidence="1">
    <location>
        <begin position="231"/>
        <end position="251"/>
    </location>
</feature>
<feature type="transmembrane region" description="Helical" evidence="1">
    <location>
        <begin position="274"/>
        <end position="294"/>
    </location>
</feature>
<feature type="transmembrane region" description="Helical" evidence="1">
    <location>
        <begin position="325"/>
        <end position="345"/>
    </location>
</feature>
<feature type="transmembrane region" description="Helical" evidence="1">
    <location>
        <begin position="349"/>
        <end position="369"/>
    </location>
</feature>
<reference key="1">
    <citation type="journal article" date="2008" name="Genome Res.">
        <title>Comparative genome analysis of Salmonella enteritidis PT4 and Salmonella gallinarum 287/91 provides insights into evolutionary and host adaptation pathways.</title>
        <authorList>
            <person name="Thomson N.R."/>
            <person name="Clayton D.J."/>
            <person name="Windhorst D."/>
            <person name="Vernikos G."/>
            <person name="Davidson S."/>
            <person name="Churcher C."/>
            <person name="Quail M.A."/>
            <person name="Stevens M."/>
            <person name="Jones M.A."/>
            <person name="Watson M."/>
            <person name="Barron A."/>
            <person name="Layton A."/>
            <person name="Pickard D."/>
            <person name="Kingsley R.A."/>
            <person name="Bignell A."/>
            <person name="Clark L."/>
            <person name="Harris B."/>
            <person name="Ormond D."/>
            <person name="Abdellah Z."/>
            <person name="Brooks K."/>
            <person name="Cherevach I."/>
            <person name="Chillingworth T."/>
            <person name="Woodward J."/>
            <person name="Norberczak H."/>
            <person name="Lord A."/>
            <person name="Arrowsmith C."/>
            <person name="Jagels K."/>
            <person name="Moule S."/>
            <person name="Mungall K."/>
            <person name="Saunders M."/>
            <person name="Whitehead S."/>
            <person name="Chabalgoity J.A."/>
            <person name="Maskell D."/>
            <person name="Humphreys T."/>
            <person name="Roberts M."/>
            <person name="Barrow P.A."/>
            <person name="Dougan G."/>
            <person name="Parkhill J."/>
        </authorList>
    </citation>
    <scope>NUCLEOTIDE SEQUENCE [LARGE SCALE GENOMIC DNA]</scope>
    <source>
        <strain>287/91 / NCTC 13346</strain>
    </source>
</reference>
<name>YCAD_SALG2</name>
<accession>B5R8I5</accession>
<keyword id="KW-0997">Cell inner membrane</keyword>
<keyword id="KW-1003">Cell membrane</keyword>
<keyword id="KW-0472">Membrane</keyword>
<keyword id="KW-0812">Transmembrane</keyword>
<keyword id="KW-1133">Transmembrane helix</keyword>
<keyword id="KW-0813">Transport</keyword>
<sequence length="382" mass="41505">MSTYTRPVMLLLCGLLLLTLAIAVLNTLVPLWLAQANLPTWQVGMVSSSYFTGNLVGTLFTGYLIKRIGFNRSYYLASLIFAAGCVGLGGMVGFWSWMSWRFIAGIGCAMIWVVVESALMCSGTSHNRGRLLAAYMMAYYMGTFLGQLLVSKVSGELLHVLPWVTGMILAGILPLLFTRIVNQQTQARHSSSISAMLKLRQARLGVNGCIISGIVLGSLYGLMPLYLKHQGMANASIGFWMAVLVSAGILGQWPMGRLADKFGRLLVLRVQVFVVILGSIAMLTQAAMAPALFILGAAGFKLYPVAMAWACEKVEHHQLVAMNQALLLSYTVGSLLGPSFAAMLMQNYSDNLLFIMIASVSFIYLLMLLRNAGQTPNPVAHI</sequence>
<dbReference type="EMBL" id="AM933173">
    <property type="protein sequence ID" value="CAR36800.1"/>
    <property type="molecule type" value="Genomic_DNA"/>
</dbReference>
<dbReference type="RefSeq" id="WP_000109265.1">
    <property type="nucleotide sequence ID" value="NC_011274.1"/>
</dbReference>
<dbReference type="SMR" id="B5R8I5"/>
<dbReference type="KEGG" id="seg:SG0910"/>
<dbReference type="HOGENOM" id="CLU_035018_1_2_6"/>
<dbReference type="Proteomes" id="UP000008321">
    <property type="component" value="Chromosome"/>
</dbReference>
<dbReference type="GO" id="GO:0005886">
    <property type="term" value="C:plasma membrane"/>
    <property type="evidence" value="ECO:0007669"/>
    <property type="project" value="UniProtKB-SubCell"/>
</dbReference>
<dbReference type="GO" id="GO:0022857">
    <property type="term" value="F:transmembrane transporter activity"/>
    <property type="evidence" value="ECO:0007669"/>
    <property type="project" value="UniProtKB-UniRule"/>
</dbReference>
<dbReference type="CDD" id="cd17477">
    <property type="entry name" value="MFS_YcaD_like"/>
    <property type="match status" value="1"/>
</dbReference>
<dbReference type="FunFam" id="1.20.1250.20:FF:000041">
    <property type="entry name" value="Uncharacterized MFS-type transporter YcaD"/>
    <property type="match status" value="1"/>
</dbReference>
<dbReference type="FunFam" id="1.20.1250.20:FF:000066">
    <property type="entry name" value="Uncharacterized MFS-type transporter YcaD"/>
    <property type="match status" value="1"/>
</dbReference>
<dbReference type="Gene3D" id="1.20.1250.20">
    <property type="entry name" value="MFS general substrate transporter like domains"/>
    <property type="match status" value="2"/>
</dbReference>
<dbReference type="HAMAP" id="MF_01149">
    <property type="entry name" value="MFS_YcaD"/>
    <property type="match status" value="1"/>
</dbReference>
<dbReference type="InterPro" id="IPR011701">
    <property type="entry name" value="MFS"/>
</dbReference>
<dbReference type="InterPro" id="IPR020846">
    <property type="entry name" value="MFS_dom"/>
</dbReference>
<dbReference type="InterPro" id="IPR036259">
    <property type="entry name" value="MFS_trans_sf"/>
</dbReference>
<dbReference type="InterPro" id="IPR023745">
    <property type="entry name" value="MFS_YcaD"/>
</dbReference>
<dbReference type="InterPro" id="IPR047200">
    <property type="entry name" value="MFS_YcaD-like"/>
</dbReference>
<dbReference type="NCBIfam" id="NF002962">
    <property type="entry name" value="PRK03633.1"/>
    <property type="match status" value="1"/>
</dbReference>
<dbReference type="PANTHER" id="PTHR23521">
    <property type="entry name" value="TRANSPORTER MFS SUPERFAMILY"/>
    <property type="match status" value="1"/>
</dbReference>
<dbReference type="PANTHER" id="PTHR23521:SF2">
    <property type="entry name" value="TRANSPORTER MFS SUPERFAMILY"/>
    <property type="match status" value="1"/>
</dbReference>
<dbReference type="Pfam" id="PF07690">
    <property type="entry name" value="MFS_1"/>
    <property type="match status" value="1"/>
</dbReference>
<dbReference type="SUPFAM" id="SSF103473">
    <property type="entry name" value="MFS general substrate transporter"/>
    <property type="match status" value="1"/>
</dbReference>
<dbReference type="PROSITE" id="PS50850">
    <property type="entry name" value="MFS"/>
    <property type="match status" value="1"/>
</dbReference>
<comment type="subcellular location">
    <subcellularLocation>
        <location evidence="1">Cell inner membrane</location>
        <topology evidence="1">Multi-pass membrane protein</topology>
    </subcellularLocation>
</comment>
<comment type="similarity">
    <text evidence="1">Belongs to the major facilitator superfamily. YcaD (TC 2.A.1.26) family.</text>
</comment>
<gene>
    <name evidence="1" type="primary">ycaD</name>
    <name type="ordered locus">SG0910</name>
</gene>
<protein>
    <recommendedName>
        <fullName evidence="1">Uncharacterized MFS-type transporter YcaD</fullName>
    </recommendedName>
</protein>
<organism>
    <name type="scientific">Salmonella gallinarum (strain 287/91 / NCTC 13346)</name>
    <dbReference type="NCBI Taxonomy" id="550538"/>
    <lineage>
        <taxon>Bacteria</taxon>
        <taxon>Pseudomonadati</taxon>
        <taxon>Pseudomonadota</taxon>
        <taxon>Gammaproteobacteria</taxon>
        <taxon>Enterobacterales</taxon>
        <taxon>Enterobacteriaceae</taxon>
        <taxon>Salmonella</taxon>
    </lineage>
</organism>